<dbReference type="EC" id="3.1.1.4"/>
<dbReference type="EMBL" id="AM238699">
    <property type="protein sequence ID" value="CAJ87659.1"/>
    <property type="molecule type" value="mRNA"/>
</dbReference>
<dbReference type="SMR" id="Q1RP78"/>
<dbReference type="GO" id="GO:0005576">
    <property type="term" value="C:extracellular region"/>
    <property type="evidence" value="ECO:0007669"/>
    <property type="project" value="UniProtKB-SubCell"/>
</dbReference>
<dbReference type="GO" id="GO:0005509">
    <property type="term" value="F:calcium ion binding"/>
    <property type="evidence" value="ECO:0007669"/>
    <property type="project" value="InterPro"/>
</dbReference>
<dbReference type="GO" id="GO:0047498">
    <property type="term" value="F:calcium-dependent phospholipase A2 activity"/>
    <property type="evidence" value="ECO:0007669"/>
    <property type="project" value="TreeGrafter"/>
</dbReference>
<dbReference type="GO" id="GO:0005543">
    <property type="term" value="F:phospholipid binding"/>
    <property type="evidence" value="ECO:0007669"/>
    <property type="project" value="TreeGrafter"/>
</dbReference>
<dbReference type="GO" id="GO:0090729">
    <property type="term" value="F:toxin activity"/>
    <property type="evidence" value="ECO:0007669"/>
    <property type="project" value="UniProtKB-KW"/>
</dbReference>
<dbReference type="GO" id="GO:0050482">
    <property type="term" value="P:arachidonate secretion"/>
    <property type="evidence" value="ECO:0007669"/>
    <property type="project" value="InterPro"/>
</dbReference>
<dbReference type="GO" id="GO:0016042">
    <property type="term" value="P:lipid catabolic process"/>
    <property type="evidence" value="ECO:0007669"/>
    <property type="project" value="InterPro"/>
</dbReference>
<dbReference type="GO" id="GO:0042130">
    <property type="term" value="P:negative regulation of T cell proliferation"/>
    <property type="evidence" value="ECO:0007669"/>
    <property type="project" value="TreeGrafter"/>
</dbReference>
<dbReference type="GO" id="GO:0006644">
    <property type="term" value="P:phospholipid metabolic process"/>
    <property type="evidence" value="ECO:0007669"/>
    <property type="project" value="InterPro"/>
</dbReference>
<dbReference type="CDD" id="cd00125">
    <property type="entry name" value="PLA2c"/>
    <property type="match status" value="1"/>
</dbReference>
<dbReference type="FunFam" id="1.20.90.10:FF:000001">
    <property type="entry name" value="Basic phospholipase A2 homolog"/>
    <property type="match status" value="1"/>
</dbReference>
<dbReference type="Gene3D" id="1.20.90.10">
    <property type="entry name" value="Phospholipase A2 domain"/>
    <property type="match status" value="1"/>
</dbReference>
<dbReference type="InterPro" id="IPR001211">
    <property type="entry name" value="PLipase_A2"/>
</dbReference>
<dbReference type="InterPro" id="IPR033112">
    <property type="entry name" value="PLipase_A2_Asp_AS"/>
</dbReference>
<dbReference type="InterPro" id="IPR016090">
    <property type="entry name" value="PLipase_A2_dom"/>
</dbReference>
<dbReference type="InterPro" id="IPR036444">
    <property type="entry name" value="PLipase_A2_dom_sf"/>
</dbReference>
<dbReference type="InterPro" id="IPR033113">
    <property type="entry name" value="PLipase_A2_His_AS"/>
</dbReference>
<dbReference type="PANTHER" id="PTHR11716">
    <property type="entry name" value="PHOSPHOLIPASE A2 FAMILY MEMBER"/>
    <property type="match status" value="1"/>
</dbReference>
<dbReference type="PANTHER" id="PTHR11716:SF9">
    <property type="entry name" value="PHOSPHOLIPASE A2, MEMBRANE ASSOCIATED"/>
    <property type="match status" value="1"/>
</dbReference>
<dbReference type="Pfam" id="PF00068">
    <property type="entry name" value="Phospholip_A2_1"/>
    <property type="match status" value="1"/>
</dbReference>
<dbReference type="PRINTS" id="PR00389">
    <property type="entry name" value="PHPHLIPASEA2"/>
</dbReference>
<dbReference type="SMART" id="SM00085">
    <property type="entry name" value="PA2c"/>
    <property type="match status" value="1"/>
</dbReference>
<dbReference type="SUPFAM" id="SSF48619">
    <property type="entry name" value="Phospholipase A2, PLA2"/>
    <property type="match status" value="1"/>
</dbReference>
<dbReference type="PROSITE" id="PS00119">
    <property type="entry name" value="PA2_ASP"/>
    <property type="match status" value="1"/>
</dbReference>
<dbReference type="PROSITE" id="PS00118">
    <property type="entry name" value="PA2_HIS"/>
    <property type="match status" value="1"/>
</dbReference>
<protein>
    <recommendedName>
        <fullName>Basic phospholipase A2 chain HDP-2P</fullName>
        <shortName>svPLA2</shortName>
        <ecNumber>3.1.1.4</ecNumber>
    </recommendedName>
    <alternativeName>
        <fullName>Heterodimeric neurotoxic phospholipases A2 basic subunit 2</fullName>
    </alternativeName>
    <alternativeName>
        <fullName>Phosphatidylcholine 2-acylhydrolase</fullName>
    </alternativeName>
</protein>
<feature type="signal peptide" evidence="4">
    <location>
        <begin position="1"/>
        <end position="16"/>
    </location>
</feature>
<feature type="chain" id="PRO_5000079753" description="Basic phospholipase A2 chain HDP-2P">
    <location>
        <begin position="17"/>
        <end position="138"/>
    </location>
</feature>
<feature type="active site" evidence="1">
    <location>
        <position position="63"/>
    </location>
</feature>
<feature type="active site" evidence="1">
    <location>
        <position position="105"/>
    </location>
</feature>
<feature type="binding site" evidence="1">
    <location>
        <position position="43"/>
    </location>
    <ligand>
        <name>Ca(2+)</name>
        <dbReference type="ChEBI" id="CHEBI:29108"/>
    </ligand>
</feature>
<feature type="binding site" evidence="1">
    <location>
        <position position="45"/>
    </location>
    <ligand>
        <name>Ca(2+)</name>
        <dbReference type="ChEBI" id="CHEBI:29108"/>
    </ligand>
</feature>
<feature type="binding site" evidence="1">
    <location>
        <position position="47"/>
    </location>
    <ligand>
        <name>Ca(2+)</name>
        <dbReference type="ChEBI" id="CHEBI:29108"/>
    </ligand>
</feature>
<feature type="binding site" evidence="1">
    <location>
        <position position="64"/>
    </location>
    <ligand>
        <name>Ca(2+)</name>
        <dbReference type="ChEBI" id="CHEBI:29108"/>
    </ligand>
</feature>
<feature type="disulfide bond" evidence="1">
    <location>
        <begin position="42"/>
        <end position="131"/>
    </location>
</feature>
<feature type="disulfide bond" evidence="1">
    <location>
        <begin position="44"/>
        <end position="60"/>
    </location>
</feature>
<feature type="disulfide bond" evidence="1">
    <location>
        <begin position="59"/>
        <end position="111"/>
    </location>
</feature>
<feature type="disulfide bond" evidence="1">
    <location>
        <begin position="65"/>
        <end position="138"/>
    </location>
</feature>
<feature type="disulfide bond" evidence="1">
    <location>
        <begin position="66"/>
        <end position="104"/>
    </location>
</feature>
<feature type="disulfide bond" evidence="1">
    <location>
        <begin position="73"/>
        <end position="97"/>
    </location>
</feature>
<feature type="disulfide bond" evidence="1">
    <location>
        <begin position="91"/>
        <end position="102"/>
    </location>
</feature>
<proteinExistence type="evidence at protein level"/>
<comment type="function">
    <text evidence="4">Monomer: snake venom phospholipase A2 (PLA2) that affects neuromuscular transmission presynaptically. It has catalytic activity, anticoagulant activity and weakly inhibits ADP-induced platelet aggregation. PLA2 catalyzes the calcium-dependent hydrolysis of the 2-acyl groups in 3-sn-phosphoglycerides.</text>
</comment>
<comment type="function">
    <text evidence="4">Heterodimer: shows the same activities as the monomer, but with a lower potency.</text>
</comment>
<comment type="catalytic activity">
    <reaction evidence="2 3">
        <text>a 1,2-diacyl-sn-glycero-3-phosphocholine + H2O = a 1-acyl-sn-glycero-3-phosphocholine + a fatty acid + H(+)</text>
        <dbReference type="Rhea" id="RHEA:15801"/>
        <dbReference type="ChEBI" id="CHEBI:15377"/>
        <dbReference type="ChEBI" id="CHEBI:15378"/>
        <dbReference type="ChEBI" id="CHEBI:28868"/>
        <dbReference type="ChEBI" id="CHEBI:57643"/>
        <dbReference type="ChEBI" id="CHEBI:58168"/>
        <dbReference type="EC" id="3.1.1.4"/>
    </reaction>
</comment>
<comment type="cofactor">
    <cofactor evidence="1">
        <name>Ca(2+)</name>
        <dbReference type="ChEBI" id="CHEBI:29108"/>
    </cofactor>
    <text evidence="1">Binds 1 Ca(2+) ion.</text>
</comment>
<comment type="activity regulation">
    <text evidence="1 5">Enzymatic activity and neurotoxicity are inhibited by Triton X-100 (By similarity). Triton X-100 has been determined to be located in the center of the hydrophobic channel of the enzyme (PubMed:19500614).</text>
</comment>
<comment type="subunit">
    <text>Heterodimer of an acidic and a basic chain; non-covalently linked. The toxic basic protein has phospholipase A2 activity (chain HDP-2P) and the non-toxic acidic protein functions as its inhibitor (chain HPD-1I (AC A4VBF0)).</text>
</comment>
<comment type="subcellular location">
    <subcellularLocation>
        <location>Secreted</location>
    </subcellularLocation>
</comment>
<comment type="tissue specificity">
    <text>Expressed by the venom gland.</text>
</comment>
<comment type="mass spectrometry" mass="13827.0" error="1.0" method="MALDI" evidence="4"/>
<comment type="similarity">
    <text evidence="6">Belongs to the phospholipase A2 family. Group II subfamily. D49 sub-subfamily.</text>
</comment>
<reference key="1">
    <citation type="journal article" date="2008" name="Toxicon">
        <title>Heterodimeric neurotoxic phospholipases A2 -- the first proteins from venom of recently established species Vipera nikolskii: implication of venom composition in viper systematics.</title>
        <authorList>
            <person name="Ramazanova A.S."/>
            <person name="Zavada L.L."/>
            <person name="Starkov V.G."/>
            <person name="Kovyazina I.V."/>
            <person name="Subbotina T.F."/>
            <person name="Kostyukhina E.E."/>
            <person name="Dementieva I.N."/>
            <person name="Ovchinnikova T.V."/>
            <person name="Utkin Y.N."/>
        </authorList>
    </citation>
    <scope>NUCLEOTIDE SEQUENCE [MRNA]</scope>
    <scope>PROTEIN SEQUENCE OF 17-56; 59-71; 77-85; 87-92 AND 101-120</scope>
    <scope>FUNCTION</scope>
    <scope>MASS SPECTROMETRY</scope>
    <source>
        <tissue>Venom</tissue>
        <tissue>Venom gland</tissue>
    </source>
</reference>
<reference key="2">
    <citation type="journal article" date="2009" name="Toxicon">
        <title>Functions, structures and Triton X-100 effect for the catalytic subunits of heterodimeric phospholipases A2 from Vipera nikolskii venom.</title>
        <authorList>
            <person name="Gao W."/>
            <person name="Starkov V.G."/>
            <person name="He Z.X."/>
            <person name="Wang Q.H."/>
            <person name="Tsetlin V.I."/>
            <person name="Utkin Y.N."/>
            <person name="Lin Z.J."/>
            <person name="Bi R.C."/>
        </authorList>
    </citation>
    <scope>CRYSTALLIZATION</scope>
    <source>
        <tissue>Venom</tissue>
    </source>
</reference>
<organism>
    <name type="scientific">Vipera nikolskii</name>
    <name type="common">Nikolsky's adder</name>
    <name type="synonym">Vipera berus nikolskii</name>
    <dbReference type="NCBI Taxonomy" id="1808362"/>
    <lineage>
        <taxon>Eukaryota</taxon>
        <taxon>Metazoa</taxon>
        <taxon>Chordata</taxon>
        <taxon>Craniata</taxon>
        <taxon>Vertebrata</taxon>
        <taxon>Euteleostomi</taxon>
        <taxon>Lepidosauria</taxon>
        <taxon>Squamata</taxon>
        <taxon>Bifurcata</taxon>
        <taxon>Unidentata</taxon>
        <taxon>Episquamata</taxon>
        <taxon>Toxicofera</taxon>
        <taxon>Serpentes</taxon>
        <taxon>Colubroidea</taxon>
        <taxon>Viperidae</taxon>
        <taxon>Viperinae</taxon>
        <taxon>Vipera</taxon>
    </lineage>
</organism>
<sequence length="138" mass="15594">MRILWIVAVCLIGVEGNLFQFAKMINGKLGAFSVWNYISYGCYCGWGGQGTPKDATDRCCFVHDCCYGRVRGCNPKLAIYAYSFKKGNIVCGKNNGCLRDICECDRVAANCFHQNKNTYNKNYRFLSSSRCRQTSEQC</sequence>
<name>PA2B2_VIPNI</name>
<evidence type="ECO:0000250" key="1"/>
<evidence type="ECO:0000255" key="2">
    <source>
        <dbReference type="PROSITE-ProRule" id="PRU10035"/>
    </source>
</evidence>
<evidence type="ECO:0000255" key="3">
    <source>
        <dbReference type="PROSITE-ProRule" id="PRU10036"/>
    </source>
</evidence>
<evidence type="ECO:0000269" key="4">
    <source>
    </source>
</evidence>
<evidence type="ECO:0000269" key="5">
    <source>
    </source>
</evidence>
<evidence type="ECO:0000305" key="6"/>
<accession>Q1RP78</accession>
<keyword id="KW-1203">Blood coagulation cascade inhibiting toxin</keyword>
<keyword id="KW-0903">Direct protein sequencing</keyword>
<keyword id="KW-1015">Disulfide bond</keyword>
<keyword id="KW-1199">Hemostasis impairing toxin</keyword>
<keyword id="KW-0378">Hydrolase</keyword>
<keyword id="KW-0479">Metal-binding</keyword>
<keyword id="KW-0528">Neurotoxin</keyword>
<keyword id="KW-1201">Platelet aggregation inhibiting toxin</keyword>
<keyword id="KW-0638">Presynaptic neurotoxin</keyword>
<keyword id="KW-0964">Secreted</keyword>
<keyword id="KW-0732">Signal</keyword>
<keyword id="KW-0800">Toxin</keyword>